<reference key="1">
    <citation type="journal article" date="1995" name="J. Biol. Chem.">
        <title>RNA trans-splicing in flatworms. Analysis of trans-spliced mRNAs and genes in the human parasite, Schistosoma mansoni.</title>
        <authorList>
            <person name="Davis R.E."/>
            <person name="Hardwick C."/>
            <person name="Tavernier P."/>
            <person name="Hodgson S."/>
            <person name="Singh H."/>
        </authorList>
    </citation>
    <scope>NUCLEOTIDE SEQUENCE [MRNA]</scope>
    <source>
        <strain>Puerto Rican</strain>
    </source>
</reference>
<protein>
    <recommendedName>
        <fullName>WD repeat-containing protein SL1-17</fullName>
    </recommendedName>
</protein>
<sequence>MYSTKCIQKQAHKEGIWCCTWGENRNRNKQYIITGSLDNGLIAWEWTNSQLKCLYQFEGHRLGVISVDINSTGTLAASSSLDSQILLWDLETGRLTKTYDGDPADTWTIAFSPDSRFLATGSHTGCVNMINVQTAQKEGSIQLEGKFVYXLAYISDGSKLAAGTINGLVSICDLETGSVQFLDGHATPVRSVSFSPDGRLLASASDDKQIKVFDVRDGRLVIPSLNGHKGWVVSVDFASDNRHLVTASTDCSVRIWDLASKEEKHCFNTHEDQVWCARYSPQGNNIISVGDDRSIMIYQCA</sequence>
<name>WSL17_SCHMA</name>
<feature type="chain" id="PRO_0000051462" description="WD repeat-containing protein SL1-17">
    <location>
        <begin position="1"/>
        <end position="301"/>
    </location>
</feature>
<feature type="repeat" description="WD 1">
    <location>
        <begin position="11"/>
        <end position="54"/>
    </location>
</feature>
<feature type="repeat" description="WD 2">
    <location>
        <begin position="59"/>
        <end position="98"/>
    </location>
</feature>
<feature type="repeat" description="WD 3">
    <location>
        <begin position="101"/>
        <end position="140"/>
    </location>
</feature>
<feature type="repeat" description="WD 4">
    <location>
        <begin position="143"/>
        <end position="182"/>
    </location>
</feature>
<feature type="repeat" description="WD 5">
    <location>
        <begin position="184"/>
        <end position="223"/>
    </location>
</feature>
<feature type="repeat" description="WD 6">
    <location>
        <begin position="227"/>
        <end position="266"/>
    </location>
</feature>
<feature type="repeat" description="WD 7">
    <location>
        <begin position="269"/>
        <end position="300"/>
    </location>
</feature>
<organism>
    <name type="scientific">Schistosoma mansoni</name>
    <name type="common">Blood fluke</name>
    <dbReference type="NCBI Taxonomy" id="6183"/>
    <lineage>
        <taxon>Eukaryota</taxon>
        <taxon>Metazoa</taxon>
        <taxon>Spiralia</taxon>
        <taxon>Lophotrochozoa</taxon>
        <taxon>Platyhelminthes</taxon>
        <taxon>Trematoda</taxon>
        <taxon>Digenea</taxon>
        <taxon>Strigeidida</taxon>
        <taxon>Schistosomatoidea</taxon>
        <taxon>Schistosomatidae</taxon>
        <taxon>Schistosoma</taxon>
    </lineage>
</organism>
<proteinExistence type="evidence at transcript level"/>
<keyword id="KW-1185">Reference proteome</keyword>
<keyword id="KW-0677">Repeat</keyword>
<keyword id="KW-0853">WD repeat</keyword>
<accession>Q26544</accession>
<dbReference type="EMBL" id="U30261">
    <property type="protein sequence ID" value="AAC46896.1"/>
    <property type="molecule type" value="mRNA"/>
</dbReference>
<dbReference type="FunCoup" id="Q26544">
    <property type="interactions" value="234"/>
</dbReference>
<dbReference type="STRING" id="6183.Q26544"/>
<dbReference type="eggNOG" id="KOG4155">
    <property type="taxonomic scope" value="Eukaryota"/>
</dbReference>
<dbReference type="HOGENOM" id="CLU_000288_57_11_1"/>
<dbReference type="InParanoid" id="Q26544"/>
<dbReference type="Proteomes" id="UP000008854">
    <property type="component" value="Unassembled WGS sequence"/>
</dbReference>
<dbReference type="GO" id="GO:0016593">
    <property type="term" value="C:Cdc73/Paf1 complex"/>
    <property type="evidence" value="ECO:0007669"/>
    <property type="project" value="TreeGrafter"/>
</dbReference>
<dbReference type="CDD" id="cd00200">
    <property type="entry name" value="WD40"/>
    <property type="match status" value="1"/>
</dbReference>
<dbReference type="Gene3D" id="2.130.10.10">
    <property type="entry name" value="YVTN repeat-like/Quinoprotein amine dehydrogenase"/>
    <property type="match status" value="1"/>
</dbReference>
<dbReference type="InterPro" id="IPR020472">
    <property type="entry name" value="G-protein_beta_WD-40_rep"/>
</dbReference>
<dbReference type="InterPro" id="IPR051510">
    <property type="entry name" value="SKI8"/>
</dbReference>
<dbReference type="InterPro" id="IPR015943">
    <property type="entry name" value="WD40/YVTN_repeat-like_dom_sf"/>
</dbReference>
<dbReference type="InterPro" id="IPR019775">
    <property type="entry name" value="WD40_repeat_CS"/>
</dbReference>
<dbReference type="InterPro" id="IPR036322">
    <property type="entry name" value="WD40_repeat_dom_sf"/>
</dbReference>
<dbReference type="InterPro" id="IPR001680">
    <property type="entry name" value="WD40_rpt"/>
</dbReference>
<dbReference type="PANTHER" id="PTHR44090:SF1">
    <property type="entry name" value="SUPERKILLER COMPLEX PROTEIN 8"/>
    <property type="match status" value="1"/>
</dbReference>
<dbReference type="PANTHER" id="PTHR44090">
    <property type="entry name" value="WD REPEAT-CONTAINING PROTEIN 61"/>
    <property type="match status" value="1"/>
</dbReference>
<dbReference type="Pfam" id="PF00400">
    <property type="entry name" value="WD40"/>
    <property type="match status" value="6"/>
</dbReference>
<dbReference type="PRINTS" id="PR00320">
    <property type="entry name" value="GPROTEINBRPT"/>
</dbReference>
<dbReference type="SMART" id="SM00320">
    <property type="entry name" value="WD40"/>
    <property type="match status" value="7"/>
</dbReference>
<dbReference type="SUPFAM" id="SSF50978">
    <property type="entry name" value="WD40 repeat-like"/>
    <property type="match status" value="1"/>
</dbReference>
<dbReference type="PROSITE" id="PS00678">
    <property type="entry name" value="WD_REPEATS_1"/>
    <property type="match status" value="2"/>
</dbReference>
<dbReference type="PROSITE" id="PS50082">
    <property type="entry name" value="WD_REPEATS_2"/>
    <property type="match status" value="4"/>
</dbReference>
<dbReference type="PROSITE" id="PS50294">
    <property type="entry name" value="WD_REPEATS_REGION"/>
    <property type="match status" value="1"/>
</dbReference>